<proteinExistence type="predicted"/>
<accession>P23227</accession>
<reference key="1">
    <citation type="submission" date="1990-10" db="EMBL/GenBank/DDBJ databases">
        <authorList>
            <person name="Lum R."/>
        </authorList>
    </citation>
    <scope>NUCLEOTIDE SEQUENCE [GENOMIC DNA]</scope>
</reference>
<sequence>MKRLLVLTLVSAILMAEFLDATDAVTTRRRRRRHLHKGAGKSQMLEEVNMEVKAKNFAQEMEREDGKLHFLGTYNEPVMNNDLFCGL</sequence>
<dbReference type="EMBL" id="X54889">
    <property type="protein sequence ID" value="CAA38661.1"/>
    <property type="molecule type" value="Genomic_DNA"/>
</dbReference>
<name>ECTP_TRIGR</name>
<feature type="signal peptide">
    <location>
        <begin position="1"/>
        <end position="16"/>
    </location>
</feature>
<feature type="chain" id="PRO_0000021148" description="Developmentally-regulated ectodermal protein">
    <location>
        <begin position="17"/>
        <end position="87"/>
    </location>
</feature>
<protein>
    <recommendedName>
        <fullName>Developmentally-regulated ectodermal protein</fullName>
    </recommendedName>
</protein>
<keyword id="KW-0217">Developmental protein</keyword>
<keyword id="KW-0732">Signal</keyword>
<organism>
    <name type="scientific">Tripneustes gratilla</name>
    <name type="common">Hawaian sea urchin</name>
    <name type="synonym">Echinus gratilla</name>
    <dbReference type="NCBI Taxonomy" id="7673"/>
    <lineage>
        <taxon>Eukaryota</taxon>
        <taxon>Metazoa</taxon>
        <taxon>Echinodermata</taxon>
        <taxon>Eleutherozoa</taxon>
        <taxon>Echinozoa</taxon>
        <taxon>Echinoidea</taxon>
        <taxon>Euechinoidea</taxon>
        <taxon>Echinacea</taxon>
        <taxon>Temnopleuroida</taxon>
        <taxon>Toxopneustidae</taxon>
        <taxon>Tripneustes</taxon>
    </lineage>
</organism>